<organism>
    <name type="scientific">Halobacterium salinarum (strain ATCC 29341 / DSM 671 / R1)</name>
    <dbReference type="NCBI Taxonomy" id="478009"/>
    <lineage>
        <taxon>Archaea</taxon>
        <taxon>Methanobacteriati</taxon>
        <taxon>Methanobacteriota</taxon>
        <taxon>Stenosarchaea group</taxon>
        <taxon>Halobacteria</taxon>
        <taxon>Halobacteriales</taxon>
        <taxon>Halobacteriaceae</taxon>
        <taxon>Halobacterium</taxon>
        <taxon>Halobacterium salinarum NRC-34001</taxon>
    </lineage>
</organism>
<name>FEN_HALS3</name>
<sequence>MGNADLRQLAAIEETPFADLEGSVVAVDAHNWLYKYLTTTVQWTGADVYTTSDGTEVANLVGAVQGLPKFFEHGLTPVFVWDGGVTELKDDEIADRREQRERYEEQLDDAREAGDAAEAARLDARTQRLTPTIHETTRELFDLLDIPQVEAPAEGEAQAAYMTRTDDAVDYAGSDDYDCLLLGSPVTLRQLTSSGHPELMDFDATLAEHDLTWEQLVDVGILCGTDFNPGIDGFGPTTALDAIGEHGDLWDVLAAEGEHVAHGDRIRELFLNPDVTDDYVIDPDVSPAIDAARAFVTDEWEVDADAVARGFERIDAAAAQTGLDRWT</sequence>
<evidence type="ECO:0000250" key="1"/>
<evidence type="ECO:0000255" key="2">
    <source>
        <dbReference type="HAMAP-Rule" id="MF_00614"/>
    </source>
</evidence>
<reference key="1">
    <citation type="journal article" date="2008" name="Genomics">
        <title>Evolution in the laboratory: the genome of Halobacterium salinarum strain R1 compared to that of strain NRC-1.</title>
        <authorList>
            <person name="Pfeiffer F."/>
            <person name="Schuster S.C."/>
            <person name="Broicher A."/>
            <person name="Falb M."/>
            <person name="Palm P."/>
            <person name="Rodewald K."/>
            <person name="Ruepp A."/>
            <person name="Soppa J."/>
            <person name="Tittor J."/>
            <person name="Oesterhelt D."/>
        </authorList>
    </citation>
    <scope>NUCLEOTIDE SEQUENCE [LARGE SCALE GENOMIC DNA]</scope>
    <source>
        <strain>ATCC 29341 / DSM 671 / R1</strain>
    </source>
</reference>
<comment type="function">
    <text evidence="1">Structure-specific nuclease with 5'-flap endonuclease and 5'-3' exonuclease activities involved in DNA replication and repair. During DNA replication, cleaves the 5'-overhanging flap structure that is generated by displacement synthesis when DNA polymerase encounters the 5'-end of a downstream Okazaki fragment. Binds the unpaired 3'-DNA end and kinks the DNA to facilitate 5' cleavage specificity. Cleaves one nucleotide into the double-stranded DNA from the junction in flap DNA, leaving a nick for ligation. Also involved in the base excision repair (BER) pathway. Acts as a genome stabilization factor that prevents flaps from equilibrating into structures that lead to duplications and deletions. Also possesses 5'-3' exonuclease activity on nicked or gapped double-stranded DNA (By similarity).</text>
</comment>
<comment type="cofactor">
    <cofactor evidence="2">
        <name>Mg(2+)</name>
        <dbReference type="ChEBI" id="CHEBI:18420"/>
    </cofactor>
    <text evidence="2">Binds 2 magnesium ions per subunit. They probably participate in the reaction catalyzed by the enzyme. May bind an additional third magnesium ion after substrate binding.</text>
</comment>
<comment type="subunit">
    <text evidence="2">Interacts with PCNA. PCNA stimulates the nuclease activity without altering cleavage specificity.</text>
</comment>
<comment type="similarity">
    <text evidence="2">Belongs to the XPG/RAD2 endonuclease family. FEN1 subfamily.</text>
</comment>
<dbReference type="EC" id="3.1.-.-" evidence="2"/>
<dbReference type="EMBL" id="AM774415">
    <property type="protein sequence ID" value="CAP13972.1"/>
    <property type="molecule type" value="Genomic_DNA"/>
</dbReference>
<dbReference type="RefSeq" id="WP_010902986.1">
    <property type="nucleotide sequence ID" value="NC_010364.1"/>
</dbReference>
<dbReference type="SMR" id="B0R5F5"/>
<dbReference type="EnsemblBacteria" id="CAP13972">
    <property type="protein sequence ID" value="CAP13972"/>
    <property type="gene ID" value="OE_2939R"/>
</dbReference>
<dbReference type="GeneID" id="68694095"/>
<dbReference type="KEGG" id="hsl:OE_2939R"/>
<dbReference type="HOGENOM" id="CLU_032444_0_0_2"/>
<dbReference type="PhylomeDB" id="B0R5F5"/>
<dbReference type="Proteomes" id="UP000001321">
    <property type="component" value="Chromosome"/>
</dbReference>
<dbReference type="GO" id="GO:0008409">
    <property type="term" value="F:5'-3' exonuclease activity"/>
    <property type="evidence" value="ECO:0007669"/>
    <property type="project" value="UniProtKB-UniRule"/>
</dbReference>
<dbReference type="GO" id="GO:0017108">
    <property type="term" value="F:5'-flap endonuclease activity"/>
    <property type="evidence" value="ECO:0007669"/>
    <property type="project" value="UniProtKB-UniRule"/>
</dbReference>
<dbReference type="GO" id="GO:0003677">
    <property type="term" value="F:DNA binding"/>
    <property type="evidence" value="ECO:0007669"/>
    <property type="project" value="UniProtKB-UniRule"/>
</dbReference>
<dbReference type="GO" id="GO:0000287">
    <property type="term" value="F:magnesium ion binding"/>
    <property type="evidence" value="ECO:0007669"/>
    <property type="project" value="UniProtKB-UniRule"/>
</dbReference>
<dbReference type="GO" id="GO:0006281">
    <property type="term" value="P:DNA repair"/>
    <property type="evidence" value="ECO:0007669"/>
    <property type="project" value="UniProtKB-UniRule"/>
</dbReference>
<dbReference type="GO" id="GO:0043137">
    <property type="term" value="P:DNA replication, removal of RNA primer"/>
    <property type="evidence" value="ECO:0007669"/>
    <property type="project" value="UniProtKB-UniRule"/>
</dbReference>
<dbReference type="CDD" id="cd09903">
    <property type="entry name" value="H3TH_FEN1-Arc"/>
    <property type="match status" value="1"/>
</dbReference>
<dbReference type="CDD" id="cd09867">
    <property type="entry name" value="PIN_FEN1"/>
    <property type="match status" value="1"/>
</dbReference>
<dbReference type="Gene3D" id="1.10.150.20">
    <property type="entry name" value="5' to 3' exonuclease, C-terminal subdomain"/>
    <property type="match status" value="1"/>
</dbReference>
<dbReference type="Gene3D" id="3.40.50.1010">
    <property type="entry name" value="5'-nuclease"/>
    <property type="match status" value="1"/>
</dbReference>
<dbReference type="HAMAP" id="MF_00614">
    <property type="entry name" value="Fen"/>
    <property type="match status" value="1"/>
</dbReference>
<dbReference type="InterPro" id="IPR036279">
    <property type="entry name" value="5-3_exonuclease_C_sf"/>
</dbReference>
<dbReference type="InterPro" id="IPR023426">
    <property type="entry name" value="Flap_endonuc"/>
</dbReference>
<dbReference type="InterPro" id="IPR019973">
    <property type="entry name" value="Flap_endonuc_arc"/>
</dbReference>
<dbReference type="InterPro" id="IPR008918">
    <property type="entry name" value="HhH2"/>
</dbReference>
<dbReference type="InterPro" id="IPR029060">
    <property type="entry name" value="PIN-like_dom_sf"/>
</dbReference>
<dbReference type="InterPro" id="IPR006086">
    <property type="entry name" value="XPG-I_dom"/>
</dbReference>
<dbReference type="InterPro" id="IPR006084">
    <property type="entry name" value="XPG/Rad2"/>
</dbReference>
<dbReference type="InterPro" id="IPR019974">
    <property type="entry name" value="XPG_CS"/>
</dbReference>
<dbReference type="InterPro" id="IPR006085">
    <property type="entry name" value="XPG_DNA_repair_N"/>
</dbReference>
<dbReference type="NCBIfam" id="TIGR03674">
    <property type="entry name" value="fen_arch"/>
    <property type="match status" value="1"/>
</dbReference>
<dbReference type="PANTHER" id="PTHR11081:SF9">
    <property type="entry name" value="FLAP ENDONUCLEASE 1"/>
    <property type="match status" value="1"/>
</dbReference>
<dbReference type="PANTHER" id="PTHR11081">
    <property type="entry name" value="FLAP ENDONUCLEASE FAMILY MEMBER"/>
    <property type="match status" value="1"/>
</dbReference>
<dbReference type="Pfam" id="PF00867">
    <property type="entry name" value="XPG_I"/>
    <property type="match status" value="1"/>
</dbReference>
<dbReference type="Pfam" id="PF00752">
    <property type="entry name" value="XPG_N"/>
    <property type="match status" value="1"/>
</dbReference>
<dbReference type="PRINTS" id="PR00853">
    <property type="entry name" value="XPGRADSUPER"/>
</dbReference>
<dbReference type="SMART" id="SM00279">
    <property type="entry name" value="HhH2"/>
    <property type="match status" value="1"/>
</dbReference>
<dbReference type="SMART" id="SM00484">
    <property type="entry name" value="XPGI"/>
    <property type="match status" value="1"/>
</dbReference>
<dbReference type="SMART" id="SM00485">
    <property type="entry name" value="XPGN"/>
    <property type="match status" value="1"/>
</dbReference>
<dbReference type="SUPFAM" id="SSF47807">
    <property type="entry name" value="5' to 3' exonuclease, C-terminal subdomain"/>
    <property type="match status" value="1"/>
</dbReference>
<dbReference type="SUPFAM" id="SSF88723">
    <property type="entry name" value="PIN domain-like"/>
    <property type="match status" value="1"/>
</dbReference>
<dbReference type="PROSITE" id="PS00841">
    <property type="entry name" value="XPG_1"/>
    <property type="match status" value="1"/>
</dbReference>
<keyword id="KW-0227">DNA damage</keyword>
<keyword id="KW-0234">DNA repair</keyword>
<keyword id="KW-0235">DNA replication</keyword>
<keyword id="KW-0255">Endonuclease</keyword>
<keyword id="KW-0269">Exonuclease</keyword>
<keyword id="KW-0378">Hydrolase</keyword>
<keyword id="KW-0460">Magnesium</keyword>
<keyword id="KW-0479">Metal-binding</keyword>
<keyword id="KW-0540">Nuclease</keyword>
<protein>
    <recommendedName>
        <fullName evidence="2">Flap endonuclease 1</fullName>
        <shortName evidence="2">FEN-1</shortName>
        <ecNumber evidence="2">3.1.-.-</ecNumber>
    </recommendedName>
    <alternativeName>
        <fullName evidence="2">Flap structure-specific endonuclease 1</fullName>
    </alternativeName>
</protein>
<accession>B0R5F5</accession>
<feature type="chain" id="PRO_1000130402" description="Flap endonuclease 1">
    <location>
        <begin position="1"/>
        <end position="327"/>
    </location>
</feature>
<feature type="region of interest" description="N-domain">
    <location>
        <begin position="1"/>
        <end position="100"/>
    </location>
</feature>
<feature type="region of interest" description="I-domain">
    <location>
        <begin position="118"/>
        <end position="247"/>
    </location>
</feature>
<feature type="region of interest" description="Interaction with PCNA" evidence="2">
    <location>
        <begin position="319"/>
        <end position="327"/>
    </location>
</feature>
<feature type="binding site" evidence="2">
    <location>
        <position position="28"/>
    </location>
    <ligand>
        <name>Mg(2+)</name>
        <dbReference type="ChEBI" id="CHEBI:18420"/>
        <label>1</label>
    </ligand>
</feature>
<feature type="binding site" evidence="2">
    <location>
        <position position="82"/>
    </location>
    <ligand>
        <name>Mg(2+)</name>
        <dbReference type="ChEBI" id="CHEBI:18420"/>
        <label>1</label>
    </ligand>
</feature>
<feature type="binding site" evidence="2">
    <location>
        <position position="154"/>
    </location>
    <ligand>
        <name>Mg(2+)</name>
        <dbReference type="ChEBI" id="CHEBI:18420"/>
        <label>1</label>
    </ligand>
</feature>
<feature type="binding site" evidence="2">
    <location>
        <position position="156"/>
    </location>
    <ligand>
        <name>Mg(2+)</name>
        <dbReference type="ChEBI" id="CHEBI:18420"/>
        <label>1</label>
    </ligand>
</feature>
<feature type="binding site" evidence="2">
    <location>
        <position position="176"/>
    </location>
    <ligand>
        <name>Mg(2+)</name>
        <dbReference type="ChEBI" id="CHEBI:18420"/>
        <label>2</label>
    </ligand>
</feature>
<feature type="binding site" evidence="2">
    <location>
        <position position="178"/>
    </location>
    <ligand>
        <name>Mg(2+)</name>
        <dbReference type="ChEBI" id="CHEBI:18420"/>
        <label>2</label>
    </ligand>
</feature>
<feature type="binding site" evidence="2">
    <location>
        <position position="226"/>
    </location>
    <ligand>
        <name>Mg(2+)</name>
        <dbReference type="ChEBI" id="CHEBI:18420"/>
        <label>2</label>
    </ligand>
</feature>
<proteinExistence type="inferred from homology"/>
<gene>
    <name evidence="2" type="primary">fen</name>
    <name type="ordered locus">OE_2939R</name>
</gene>